<organism>
    <name type="scientific">Aliivibrio salmonicida (strain LFI1238)</name>
    <name type="common">Vibrio salmonicida (strain LFI1238)</name>
    <dbReference type="NCBI Taxonomy" id="316275"/>
    <lineage>
        <taxon>Bacteria</taxon>
        <taxon>Pseudomonadati</taxon>
        <taxon>Pseudomonadota</taxon>
        <taxon>Gammaproteobacteria</taxon>
        <taxon>Vibrionales</taxon>
        <taxon>Vibrionaceae</taxon>
        <taxon>Aliivibrio</taxon>
    </lineage>
</organism>
<dbReference type="EC" id="3.5.3.6" evidence="1"/>
<dbReference type="EMBL" id="FM178379">
    <property type="protein sequence ID" value="CAQ78206.1"/>
    <property type="molecule type" value="Genomic_DNA"/>
</dbReference>
<dbReference type="RefSeq" id="WP_012549330.1">
    <property type="nucleotide sequence ID" value="NC_011312.1"/>
</dbReference>
<dbReference type="SMR" id="B6EMS7"/>
<dbReference type="KEGG" id="vsa:VSAL_I0521"/>
<dbReference type="eggNOG" id="COG2235">
    <property type="taxonomic scope" value="Bacteria"/>
</dbReference>
<dbReference type="HOGENOM" id="CLU_052662_0_0_6"/>
<dbReference type="UniPathway" id="UPA00254">
    <property type="reaction ID" value="UER00364"/>
</dbReference>
<dbReference type="Proteomes" id="UP000001730">
    <property type="component" value="Chromosome 1"/>
</dbReference>
<dbReference type="GO" id="GO:0005737">
    <property type="term" value="C:cytoplasm"/>
    <property type="evidence" value="ECO:0007669"/>
    <property type="project" value="UniProtKB-SubCell"/>
</dbReference>
<dbReference type="GO" id="GO:0016990">
    <property type="term" value="F:arginine deiminase activity"/>
    <property type="evidence" value="ECO:0007669"/>
    <property type="project" value="UniProtKB-UniRule"/>
</dbReference>
<dbReference type="GO" id="GO:0019547">
    <property type="term" value="P:arginine catabolic process to ornithine"/>
    <property type="evidence" value="ECO:0007669"/>
    <property type="project" value="UniProtKB-UniRule"/>
</dbReference>
<dbReference type="GO" id="GO:0019546">
    <property type="term" value="P:arginine deiminase pathway"/>
    <property type="evidence" value="ECO:0007669"/>
    <property type="project" value="TreeGrafter"/>
</dbReference>
<dbReference type="FunFam" id="1.10.3930.10:FF:000002">
    <property type="entry name" value="Arginine deiminase"/>
    <property type="match status" value="1"/>
</dbReference>
<dbReference type="Gene3D" id="1.10.3930.10">
    <property type="entry name" value="Arginine deiminase"/>
    <property type="match status" value="1"/>
</dbReference>
<dbReference type="Gene3D" id="3.75.10.10">
    <property type="entry name" value="L-arginine/glycine Amidinotransferase, Chain A"/>
    <property type="match status" value="1"/>
</dbReference>
<dbReference type="HAMAP" id="MF_00242">
    <property type="entry name" value="Arg_deiminase"/>
    <property type="match status" value="1"/>
</dbReference>
<dbReference type="InterPro" id="IPR003876">
    <property type="entry name" value="Arg_deiminase"/>
</dbReference>
<dbReference type="NCBIfam" id="TIGR01078">
    <property type="entry name" value="arcA"/>
    <property type="match status" value="1"/>
</dbReference>
<dbReference type="NCBIfam" id="NF002381">
    <property type="entry name" value="PRK01388.1"/>
    <property type="match status" value="1"/>
</dbReference>
<dbReference type="PANTHER" id="PTHR47271">
    <property type="entry name" value="ARGININE DEIMINASE"/>
    <property type="match status" value="1"/>
</dbReference>
<dbReference type="PANTHER" id="PTHR47271:SF2">
    <property type="entry name" value="ARGININE DEIMINASE"/>
    <property type="match status" value="1"/>
</dbReference>
<dbReference type="Pfam" id="PF02274">
    <property type="entry name" value="ADI"/>
    <property type="match status" value="1"/>
</dbReference>
<dbReference type="PIRSF" id="PIRSF006356">
    <property type="entry name" value="Arg_deiminase"/>
    <property type="match status" value="1"/>
</dbReference>
<dbReference type="PRINTS" id="PR01466">
    <property type="entry name" value="ARGDEIMINASE"/>
</dbReference>
<dbReference type="SUPFAM" id="SSF55909">
    <property type="entry name" value="Pentein"/>
    <property type="match status" value="1"/>
</dbReference>
<evidence type="ECO:0000255" key="1">
    <source>
        <dbReference type="HAMAP-Rule" id="MF_00242"/>
    </source>
</evidence>
<reference key="1">
    <citation type="journal article" date="2008" name="BMC Genomics">
        <title>The genome sequence of the fish pathogen Aliivibrio salmonicida strain LFI1238 shows extensive evidence of gene decay.</title>
        <authorList>
            <person name="Hjerde E."/>
            <person name="Lorentzen M.S."/>
            <person name="Holden M.T."/>
            <person name="Seeger K."/>
            <person name="Paulsen S."/>
            <person name="Bason N."/>
            <person name="Churcher C."/>
            <person name="Harris D."/>
            <person name="Norbertczak H."/>
            <person name="Quail M.A."/>
            <person name="Sanders S."/>
            <person name="Thurston S."/>
            <person name="Parkhill J."/>
            <person name="Willassen N.P."/>
            <person name="Thomson N.R."/>
        </authorList>
    </citation>
    <scope>NUCLEOTIDE SEQUENCE [LARGE SCALE GENOMIC DNA]</scope>
    <source>
        <strain>LFI1238</strain>
    </source>
</reference>
<protein>
    <recommendedName>
        <fullName evidence="1">Arginine deiminase</fullName>
        <shortName evidence="1">ADI</shortName>
        <ecNumber evidence="1">3.5.3.6</ecNumber>
    </recommendedName>
    <alternativeName>
        <fullName evidence="1">Arginine dihydrolase</fullName>
        <shortName evidence="1">AD</shortName>
    </alternativeName>
</protein>
<name>ARCA_ALISL</name>
<gene>
    <name evidence="1" type="primary">arcA</name>
    <name type="ordered locus">VSAL_I0521</name>
</gene>
<comment type="catalytic activity">
    <reaction evidence="1">
        <text>L-arginine + H2O = L-citrulline + NH4(+)</text>
        <dbReference type="Rhea" id="RHEA:19597"/>
        <dbReference type="ChEBI" id="CHEBI:15377"/>
        <dbReference type="ChEBI" id="CHEBI:28938"/>
        <dbReference type="ChEBI" id="CHEBI:32682"/>
        <dbReference type="ChEBI" id="CHEBI:57743"/>
        <dbReference type="EC" id="3.5.3.6"/>
    </reaction>
</comment>
<comment type="pathway">
    <text evidence="1">Amino-acid degradation; L-arginine degradation via ADI pathway; carbamoyl phosphate from L-arginine: step 1/2.</text>
</comment>
<comment type="subcellular location">
    <subcellularLocation>
        <location evidence="1">Cytoplasm</location>
    </subcellularLocation>
</comment>
<comment type="similarity">
    <text evidence="1">Belongs to the arginine deiminase family.</text>
</comment>
<keyword id="KW-0056">Arginine metabolism</keyword>
<keyword id="KW-0963">Cytoplasm</keyword>
<keyword id="KW-0378">Hydrolase</keyword>
<feature type="chain" id="PRO_1000100734" description="Arginine deiminase">
    <location>
        <begin position="1"/>
        <end position="406"/>
    </location>
</feature>
<feature type="active site" description="Amidino-cysteine intermediate" evidence="1">
    <location>
        <position position="396"/>
    </location>
</feature>
<sequence length="406" mass="46144">MSKLFVGSEIGQLRRVILHRPERALSHLTPTNCHNLLFDDVLSVEKALHEHDQFVATLRQQDVEVLLLQDLLEETLAHPEAKQWLLRHQISHYRFGPTFANQIRAFLLEKNNKELASILLGGLAFIELPFKAPSMLQQLSDPFDFVIDPLPNHLFTRDTSCWIYGGVSINPMAKAARKRESNHLRAIYKWHPLFSNQSFPRYFGDENRHYDNATIEGGDVLIIGKGNVLVGISERTTPQGIENLAKQLFRTEQAKQVIAIKLPENRSCMHLDTVMTHMDHNVFSVYPRVIDKNMPCWSITPCGDQQLAIQEKPNFEHSLMQALELDSLNIITTGGDSYEAEREQWHDANNVLTIKPGVVVAYERNVYTNEKYDKAGITVLPIMGDELGRGRGGARCMSCPIERDGI</sequence>
<proteinExistence type="inferred from homology"/>
<accession>B6EMS7</accession>